<name>ASNA_STRPN</name>
<evidence type="ECO:0000255" key="1">
    <source>
        <dbReference type="HAMAP-Rule" id="MF_00555"/>
    </source>
</evidence>
<accession>Q97NQ0</accession>
<protein>
    <recommendedName>
        <fullName evidence="1">Aspartate--ammonia ligase</fullName>
        <ecNumber evidence="1">6.3.1.1</ecNumber>
    </recommendedName>
    <alternativeName>
        <fullName evidence="1">Asparagine synthetase A</fullName>
    </alternativeName>
</protein>
<sequence length="330" mass="37618">MKKSFIHQQEEISFVKNTFTQYLKDKLEVVEVQGPILSKVGDGMQDNLSGVENPVSVKVLQIPDATYEVVHSLAKWKRHTLARFGFGEGEGLFVHMKALRPDEDSLDATHSVYVDQWDWEKVIPNGKRNIVYLKETVEKIYKAIRLTELAVEARYDIESILPKQITFIHTEELVERYPDLTPKERENAICKEFGAVFLIGIGGELPDGKPHDGRAPDYDDWTSESENGYKGLNGDILVWNESLGGAFELSSMGIRVDEETLRRQVEITGDEDRLELEWHKSLLNGLFPLTIGGGIGQSRMAMFLLRKRHIGEVQTSVWPQEVRDTYENIL</sequence>
<comment type="catalytic activity">
    <reaction evidence="1">
        <text>L-aspartate + NH4(+) + ATP = L-asparagine + AMP + diphosphate + H(+)</text>
        <dbReference type="Rhea" id="RHEA:11372"/>
        <dbReference type="ChEBI" id="CHEBI:15378"/>
        <dbReference type="ChEBI" id="CHEBI:28938"/>
        <dbReference type="ChEBI" id="CHEBI:29991"/>
        <dbReference type="ChEBI" id="CHEBI:30616"/>
        <dbReference type="ChEBI" id="CHEBI:33019"/>
        <dbReference type="ChEBI" id="CHEBI:58048"/>
        <dbReference type="ChEBI" id="CHEBI:456215"/>
        <dbReference type="EC" id="6.3.1.1"/>
    </reaction>
</comment>
<comment type="pathway">
    <text evidence="1">Amino-acid biosynthesis; L-asparagine biosynthesis; L-asparagine from L-aspartate (ammonia route): step 1/1.</text>
</comment>
<comment type="subcellular location">
    <subcellularLocation>
        <location evidence="1">Cytoplasm</location>
    </subcellularLocation>
</comment>
<comment type="similarity">
    <text evidence="1">Belongs to the class-II aminoacyl-tRNA synthetase family. AsnA subfamily.</text>
</comment>
<feature type="chain" id="PRO_0000195891" description="Aspartate--ammonia ligase">
    <location>
        <begin position="1"/>
        <end position="330"/>
    </location>
</feature>
<organism>
    <name type="scientific">Streptococcus pneumoniae serotype 4 (strain ATCC BAA-334 / TIGR4)</name>
    <dbReference type="NCBI Taxonomy" id="170187"/>
    <lineage>
        <taxon>Bacteria</taxon>
        <taxon>Bacillati</taxon>
        <taxon>Bacillota</taxon>
        <taxon>Bacilli</taxon>
        <taxon>Lactobacillales</taxon>
        <taxon>Streptococcaceae</taxon>
        <taxon>Streptococcus</taxon>
    </lineage>
</organism>
<keyword id="KW-0028">Amino-acid biosynthesis</keyword>
<keyword id="KW-0061">Asparagine biosynthesis</keyword>
<keyword id="KW-0067">ATP-binding</keyword>
<keyword id="KW-0963">Cytoplasm</keyword>
<keyword id="KW-0436">Ligase</keyword>
<keyword id="KW-0547">Nucleotide-binding</keyword>
<keyword id="KW-1185">Reference proteome</keyword>
<proteinExistence type="inferred from homology"/>
<gene>
    <name evidence="1" type="primary">asnA</name>
    <name type="ordered locus">SP_1970</name>
</gene>
<reference key="1">
    <citation type="journal article" date="2001" name="Science">
        <title>Complete genome sequence of a virulent isolate of Streptococcus pneumoniae.</title>
        <authorList>
            <person name="Tettelin H."/>
            <person name="Nelson K.E."/>
            <person name="Paulsen I.T."/>
            <person name="Eisen J.A."/>
            <person name="Read T.D."/>
            <person name="Peterson S.N."/>
            <person name="Heidelberg J.F."/>
            <person name="DeBoy R.T."/>
            <person name="Haft D.H."/>
            <person name="Dodson R.J."/>
            <person name="Durkin A.S."/>
            <person name="Gwinn M.L."/>
            <person name="Kolonay J.F."/>
            <person name="Nelson W.C."/>
            <person name="Peterson J.D."/>
            <person name="Umayam L.A."/>
            <person name="White O."/>
            <person name="Salzberg S.L."/>
            <person name="Lewis M.R."/>
            <person name="Radune D."/>
            <person name="Holtzapple E.K."/>
            <person name="Khouri H.M."/>
            <person name="Wolf A.M."/>
            <person name="Utterback T.R."/>
            <person name="Hansen C.L."/>
            <person name="McDonald L.A."/>
            <person name="Feldblyum T.V."/>
            <person name="Angiuoli S.V."/>
            <person name="Dickinson T."/>
            <person name="Hickey E.K."/>
            <person name="Holt I.E."/>
            <person name="Loftus B.J."/>
            <person name="Yang F."/>
            <person name="Smith H.O."/>
            <person name="Venter J.C."/>
            <person name="Dougherty B.A."/>
            <person name="Morrison D.A."/>
            <person name="Hollingshead S.K."/>
            <person name="Fraser C.M."/>
        </authorList>
    </citation>
    <scope>NUCLEOTIDE SEQUENCE [LARGE SCALE GENOMIC DNA]</scope>
    <source>
        <strain>ATCC BAA-334 / TIGR4</strain>
    </source>
</reference>
<dbReference type="EC" id="6.3.1.1" evidence="1"/>
<dbReference type="EMBL" id="AE005672">
    <property type="protein sequence ID" value="AAK76037.1"/>
    <property type="molecule type" value="Genomic_DNA"/>
</dbReference>
<dbReference type="PIR" id="D95230">
    <property type="entry name" value="D95230"/>
</dbReference>
<dbReference type="RefSeq" id="WP_000747993.1">
    <property type="nucleotide sequence ID" value="NZ_CP155539.1"/>
</dbReference>
<dbReference type="SMR" id="Q97NQ0"/>
<dbReference type="PaxDb" id="170187-SP_1970"/>
<dbReference type="EnsemblBacteria" id="AAK76037">
    <property type="protein sequence ID" value="AAK76037"/>
    <property type="gene ID" value="SP_1970"/>
</dbReference>
<dbReference type="GeneID" id="45652817"/>
<dbReference type="KEGG" id="spn:SP_1970"/>
<dbReference type="eggNOG" id="COG2502">
    <property type="taxonomic scope" value="Bacteria"/>
</dbReference>
<dbReference type="PhylomeDB" id="Q97NQ0"/>
<dbReference type="BioCyc" id="SPNE170187:G1FZB-2025-MONOMER"/>
<dbReference type="UniPathway" id="UPA00134">
    <property type="reaction ID" value="UER00194"/>
</dbReference>
<dbReference type="Proteomes" id="UP000000585">
    <property type="component" value="Chromosome"/>
</dbReference>
<dbReference type="GO" id="GO:0005829">
    <property type="term" value="C:cytosol"/>
    <property type="evidence" value="ECO:0007669"/>
    <property type="project" value="TreeGrafter"/>
</dbReference>
<dbReference type="GO" id="GO:0004071">
    <property type="term" value="F:aspartate-ammonia ligase activity"/>
    <property type="evidence" value="ECO:0007669"/>
    <property type="project" value="UniProtKB-UniRule"/>
</dbReference>
<dbReference type="GO" id="GO:0005524">
    <property type="term" value="F:ATP binding"/>
    <property type="evidence" value="ECO:0007669"/>
    <property type="project" value="UniProtKB-UniRule"/>
</dbReference>
<dbReference type="GO" id="GO:0140096">
    <property type="term" value="F:catalytic activity, acting on a protein"/>
    <property type="evidence" value="ECO:0007669"/>
    <property type="project" value="UniProtKB-ARBA"/>
</dbReference>
<dbReference type="GO" id="GO:0016740">
    <property type="term" value="F:transferase activity"/>
    <property type="evidence" value="ECO:0007669"/>
    <property type="project" value="UniProtKB-ARBA"/>
</dbReference>
<dbReference type="GO" id="GO:0070981">
    <property type="term" value="P:L-asparagine biosynthetic process"/>
    <property type="evidence" value="ECO:0007669"/>
    <property type="project" value="UniProtKB-UniRule"/>
</dbReference>
<dbReference type="CDD" id="cd00645">
    <property type="entry name" value="AsnA"/>
    <property type="match status" value="1"/>
</dbReference>
<dbReference type="Gene3D" id="3.30.930.10">
    <property type="entry name" value="Bira Bifunctional Protein, Domain 2"/>
    <property type="match status" value="1"/>
</dbReference>
<dbReference type="HAMAP" id="MF_00555">
    <property type="entry name" value="AsnA"/>
    <property type="match status" value="1"/>
</dbReference>
<dbReference type="InterPro" id="IPR006195">
    <property type="entry name" value="aa-tRNA-synth_II"/>
</dbReference>
<dbReference type="InterPro" id="IPR045864">
    <property type="entry name" value="aa-tRNA-synth_II/BPL/LPL"/>
</dbReference>
<dbReference type="InterPro" id="IPR004618">
    <property type="entry name" value="AsnA"/>
</dbReference>
<dbReference type="NCBIfam" id="TIGR00669">
    <property type="entry name" value="asnA"/>
    <property type="match status" value="1"/>
</dbReference>
<dbReference type="PANTHER" id="PTHR30073">
    <property type="entry name" value="ASPARTATE--AMMONIA LIGASE"/>
    <property type="match status" value="1"/>
</dbReference>
<dbReference type="PANTHER" id="PTHR30073:SF5">
    <property type="entry name" value="ASPARTATE--AMMONIA LIGASE"/>
    <property type="match status" value="1"/>
</dbReference>
<dbReference type="Pfam" id="PF03590">
    <property type="entry name" value="AsnA"/>
    <property type="match status" value="1"/>
</dbReference>
<dbReference type="PIRSF" id="PIRSF001555">
    <property type="entry name" value="Asp_ammon_ligase"/>
    <property type="match status" value="1"/>
</dbReference>
<dbReference type="SUPFAM" id="SSF55681">
    <property type="entry name" value="Class II aaRS and biotin synthetases"/>
    <property type="match status" value="1"/>
</dbReference>
<dbReference type="PROSITE" id="PS50862">
    <property type="entry name" value="AA_TRNA_LIGASE_II"/>
    <property type="match status" value="1"/>
</dbReference>